<protein>
    <recommendedName>
        <fullName evidence="1">Large ribosomal subunit protein uL22</fullName>
    </recommendedName>
    <alternativeName>
        <fullName evidence="2">50S ribosomal protein L22</fullName>
    </alternativeName>
</protein>
<proteinExistence type="inferred from homology"/>
<evidence type="ECO:0000255" key="1">
    <source>
        <dbReference type="HAMAP-Rule" id="MF_01331"/>
    </source>
</evidence>
<evidence type="ECO:0000305" key="2"/>
<feature type="chain" id="PRO_0000243180" description="Large ribosomal subunit protein uL22">
    <location>
        <begin position="1"/>
        <end position="119"/>
    </location>
</feature>
<accession>Q3B6F7</accession>
<organism>
    <name type="scientific">Chlorobium luteolum (strain DSM 273 / BCRC 81028 / 2530)</name>
    <name type="common">Pelodictyon luteolum</name>
    <dbReference type="NCBI Taxonomy" id="319225"/>
    <lineage>
        <taxon>Bacteria</taxon>
        <taxon>Pseudomonadati</taxon>
        <taxon>Chlorobiota</taxon>
        <taxon>Chlorobiia</taxon>
        <taxon>Chlorobiales</taxon>
        <taxon>Chlorobiaceae</taxon>
        <taxon>Chlorobium/Pelodictyon group</taxon>
        <taxon>Pelodictyon</taxon>
    </lineage>
</organism>
<name>RL22_CHLL3</name>
<sequence length="119" mass="13176">MQAKAILRHTPTSPRKMRLVAGLVRGKAVDQAKAILLNSTKAASRNALQTLKSAVANYAQLNPDERVGDQELFVKSVFVDEGATLKRMLPAPMGRAYRVRKRSNHLTIIVDKVKNPETK</sequence>
<gene>
    <name evidence="1" type="primary">rplV</name>
    <name type="ordered locus">Plut_0186</name>
</gene>
<reference key="1">
    <citation type="submission" date="2005-08" db="EMBL/GenBank/DDBJ databases">
        <title>Complete sequence of Pelodictyon luteolum DSM 273.</title>
        <authorList>
            <consortium name="US DOE Joint Genome Institute"/>
            <person name="Copeland A."/>
            <person name="Lucas S."/>
            <person name="Lapidus A."/>
            <person name="Barry K."/>
            <person name="Detter J.C."/>
            <person name="Glavina T."/>
            <person name="Hammon N."/>
            <person name="Israni S."/>
            <person name="Pitluck S."/>
            <person name="Bryant D."/>
            <person name="Schmutz J."/>
            <person name="Larimer F."/>
            <person name="Land M."/>
            <person name="Kyrpides N."/>
            <person name="Ivanova N."/>
            <person name="Richardson P."/>
        </authorList>
    </citation>
    <scope>NUCLEOTIDE SEQUENCE [LARGE SCALE GENOMIC DNA]</scope>
    <source>
        <strain>DSM 273 / BCRC 81028 / 2530</strain>
    </source>
</reference>
<dbReference type="EMBL" id="CP000096">
    <property type="protein sequence ID" value="ABB23074.1"/>
    <property type="molecule type" value="Genomic_DNA"/>
</dbReference>
<dbReference type="RefSeq" id="WP_011356950.1">
    <property type="nucleotide sequence ID" value="NC_007512.1"/>
</dbReference>
<dbReference type="SMR" id="Q3B6F7"/>
<dbReference type="STRING" id="319225.Plut_0186"/>
<dbReference type="KEGG" id="plt:Plut_0186"/>
<dbReference type="eggNOG" id="COG0091">
    <property type="taxonomic scope" value="Bacteria"/>
</dbReference>
<dbReference type="HOGENOM" id="CLU_083987_3_1_10"/>
<dbReference type="OrthoDB" id="9805969at2"/>
<dbReference type="Proteomes" id="UP000002709">
    <property type="component" value="Chromosome"/>
</dbReference>
<dbReference type="GO" id="GO:0022625">
    <property type="term" value="C:cytosolic large ribosomal subunit"/>
    <property type="evidence" value="ECO:0007669"/>
    <property type="project" value="TreeGrafter"/>
</dbReference>
<dbReference type="GO" id="GO:0019843">
    <property type="term" value="F:rRNA binding"/>
    <property type="evidence" value="ECO:0007669"/>
    <property type="project" value="UniProtKB-UniRule"/>
</dbReference>
<dbReference type="GO" id="GO:0003735">
    <property type="term" value="F:structural constituent of ribosome"/>
    <property type="evidence" value="ECO:0007669"/>
    <property type="project" value="InterPro"/>
</dbReference>
<dbReference type="GO" id="GO:0006412">
    <property type="term" value="P:translation"/>
    <property type="evidence" value="ECO:0007669"/>
    <property type="project" value="UniProtKB-UniRule"/>
</dbReference>
<dbReference type="CDD" id="cd00336">
    <property type="entry name" value="Ribosomal_L22"/>
    <property type="match status" value="1"/>
</dbReference>
<dbReference type="Gene3D" id="3.90.470.10">
    <property type="entry name" value="Ribosomal protein L22/L17"/>
    <property type="match status" value="1"/>
</dbReference>
<dbReference type="HAMAP" id="MF_01331_B">
    <property type="entry name" value="Ribosomal_uL22_B"/>
    <property type="match status" value="1"/>
</dbReference>
<dbReference type="InterPro" id="IPR001063">
    <property type="entry name" value="Ribosomal_uL22"/>
</dbReference>
<dbReference type="InterPro" id="IPR005727">
    <property type="entry name" value="Ribosomal_uL22_bac/chlpt-type"/>
</dbReference>
<dbReference type="InterPro" id="IPR047867">
    <property type="entry name" value="Ribosomal_uL22_bac/org-type"/>
</dbReference>
<dbReference type="InterPro" id="IPR036394">
    <property type="entry name" value="Ribosomal_uL22_sf"/>
</dbReference>
<dbReference type="NCBIfam" id="TIGR01044">
    <property type="entry name" value="rplV_bact"/>
    <property type="match status" value="1"/>
</dbReference>
<dbReference type="PANTHER" id="PTHR13501">
    <property type="entry name" value="CHLOROPLAST 50S RIBOSOMAL PROTEIN L22-RELATED"/>
    <property type="match status" value="1"/>
</dbReference>
<dbReference type="PANTHER" id="PTHR13501:SF8">
    <property type="entry name" value="LARGE RIBOSOMAL SUBUNIT PROTEIN UL22M"/>
    <property type="match status" value="1"/>
</dbReference>
<dbReference type="Pfam" id="PF00237">
    <property type="entry name" value="Ribosomal_L22"/>
    <property type="match status" value="1"/>
</dbReference>
<dbReference type="SUPFAM" id="SSF54843">
    <property type="entry name" value="Ribosomal protein L22"/>
    <property type="match status" value="1"/>
</dbReference>
<keyword id="KW-1185">Reference proteome</keyword>
<keyword id="KW-0687">Ribonucleoprotein</keyword>
<keyword id="KW-0689">Ribosomal protein</keyword>
<keyword id="KW-0694">RNA-binding</keyword>
<keyword id="KW-0699">rRNA-binding</keyword>
<comment type="function">
    <text evidence="1">This protein binds specifically to 23S rRNA; its binding is stimulated by other ribosomal proteins, e.g. L4, L17, and L20. It is important during the early stages of 50S assembly. It makes multiple contacts with different domains of the 23S rRNA in the assembled 50S subunit and ribosome (By similarity).</text>
</comment>
<comment type="function">
    <text evidence="1">The globular domain of the protein is located near the polypeptide exit tunnel on the outside of the subunit, while an extended beta-hairpin is found that lines the wall of the exit tunnel in the center of the 70S ribosome.</text>
</comment>
<comment type="subunit">
    <text evidence="1">Part of the 50S ribosomal subunit.</text>
</comment>
<comment type="similarity">
    <text evidence="1">Belongs to the universal ribosomal protein uL22 family.</text>
</comment>